<sequence>MIVKRLNPDALKNALQKIGPEKIAQDRMHQKGVSFVFEIQHLPLSATLILKQEAISVGGDFATPRDCILAKEPFYDGVLIASAKQLERLIVKCHSQPFGLKHLAQELKSHLKAPKPNTPQIMAVLNLTPDSFYEKSRFDSKKALEEIYQWLEKGITLIDIGAASSRPESEIIDPKIEQDRLKEILLEIKSQKLYQCAKFSIDTYHATTAQMALEHYFSILNDVSGFNSAEMLEVAKDYKPTCILMHTQKTPKDMQENVFYHNLFDEMDRFFKEKLEVLEKYVLQDIILDIGFGFAKLKEHNLALIKHLSHFLKFKKPLLVGASRKNTIGLITGREVQDRLAGTLSLHLMALQNGASVLRVHDIDEHIDLIKVFKSLEETD</sequence>
<name>DHPRS_HELPY</name>
<reference key="1">
    <citation type="journal article" date="1997" name="Nature">
        <title>The complete genome sequence of the gastric pathogen Helicobacter pylori.</title>
        <authorList>
            <person name="Tomb J.-F."/>
            <person name="White O."/>
            <person name="Kerlavage A.R."/>
            <person name="Clayton R.A."/>
            <person name="Sutton G.G."/>
            <person name="Fleischmann R.D."/>
            <person name="Ketchum K.A."/>
            <person name="Klenk H.-P."/>
            <person name="Gill S.R."/>
            <person name="Dougherty B.A."/>
            <person name="Nelson K.E."/>
            <person name="Quackenbush J."/>
            <person name="Zhou L."/>
            <person name="Kirkness E.F."/>
            <person name="Peterson S.N."/>
            <person name="Loftus B.J."/>
            <person name="Richardson D.L."/>
            <person name="Dodson R.J."/>
            <person name="Khalak H.G."/>
            <person name="Glodek A."/>
            <person name="McKenney K."/>
            <person name="FitzGerald L.M."/>
            <person name="Lee N."/>
            <person name="Adams M.D."/>
            <person name="Hickey E.K."/>
            <person name="Berg D.E."/>
            <person name="Gocayne J.D."/>
            <person name="Utterback T.R."/>
            <person name="Peterson J.D."/>
            <person name="Kelley J.M."/>
            <person name="Cotton M.D."/>
            <person name="Weidman J.F."/>
            <person name="Fujii C."/>
            <person name="Bowman C."/>
            <person name="Watthey L."/>
            <person name="Wallin E."/>
            <person name="Hayes W.S."/>
            <person name="Borodovsky M."/>
            <person name="Karp P.D."/>
            <person name="Smith H.O."/>
            <person name="Fraser C.M."/>
            <person name="Venter J.C."/>
        </authorList>
    </citation>
    <scope>NUCLEOTIDE SEQUENCE [LARGE SCALE GENOMIC DNA]</scope>
    <source>
        <strain>ATCC 700392 / 26695</strain>
    </source>
</reference>
<reference key="2">
    <citation type="submission" date="2012-10" db="EMBL/GenBank/DDBJ databases">
        <title>Draft genome of Helicobacter pylori.</title>
        <authorList>
            <person name="Manolov A."/>
            <person name="Prihodko E."/>
            <person name="Larin A."/>
            <person name="Karpova I."/>
            <person name="Semashko T."/>
            <person name="Alexeev D."/>
            <person name="Kostrjukova E."/>
            <person name="Govorun V."/>
        </authorList>
    </citation>
    <scope>NUCLEOTIDE SEQUENCE [LARGE SCALE GENOMIC DNA]</scope>
    <source>
        <strain>ATCC 700392 / 26695</strain>
    </source>
</reference>
<reference key="3">
    <citation type="journal article" date="2004" name="Mol. Microbiol.">
        <title>An alternative pathway for reduced folate biosynthesis in bacteria and halophilic archaea.</title>
        <authorList>
            <person name="Levin I."/>
            <person name="Giladi M."/>
            <person name="Altman-Price N."/>
            <person name="Ortenberg R."/>
            <person name="Mevarech M."/>
        </authorList>
    </citation>
    <scope>FUNCTION</scope>
</reference>
<reference key="4">
    <citation type="journal article" date="2007" name="J. Bacteriol.">
        <title>Characterization of a novel bifunctional dihydropteroate synthase/dihydropteroate reductase enzyme from Helicobacter pylori.</title>
        <authorList>
            <person name="Levin I."/>
            <person name="Mevarech M."/>
            <person name="Palfey B.A."/>
        </authorList>
    </citation>
    <scope>FUNCTION</scope>
    <scope>CATALYTIC ACTIVITY</scope>
    <scope>COFACTOR</scope>
    <scope>MUTAGENESIS OF MET-28; LYS-31; LYS-51; GLY-58 AND LYS-92</scope>
</reference>
<accession>O25830</accession>
<comment type="function">
    <text evidence="4 5">Bifunctional enzyme that catalyzes the formation of dihydropteroate, the immediate precursor of folic acid and the reduction of dihydropteroate to tetrahydropteroate.</text>
</comment>
<comment type="catalytic activity">
    <reaction evidence="5">
        <text>(7,8-dihydropterin-6-yl)methyl diphosphate + 4-aminobenzoate = 7,8-dihydropteroate + diphosphate</text>
        <dbReference type="Rhea" id="RHEA:19949"/>
        <dbReference type="ChEBI" id="CHEBI:17836"/>
        <dbReference type="ChEBI" id="CHEBI:17839"/>
        <dbReference type="ChEBI" id="CHEBI:33019"/>
        <dbReference type="ChEBI" id="CHEBI:72950"/>
        <dbReference type="EC" id="2.5.1.15"/>
    </reaction>
</comment>
<comment type="catalytic activity">
    <reaction evidence="5">
        <text>(6S)-5,6,7,8-tetrahydropteroate + NAD(+) = 7,8-dihydropteroate + NADH + H(+)</text>
        <dbReference type="Rhea" id="RHEA:45744"/>
        <dbReference type="ChEBI" id="CHEBI:15378"/>
        <dbReference type="ChEBI" id="CHEBI:17839"/>
        <dbReference type="ChEBI" id="CHEBI:57540"/>
        <dbReference type="ChEBI" id="CHEBI:57945"/>
        <dbReference type="ChEBI" id="CHEBI:85414"/>
    </reaction>
</comment>
<comment type="cofactor">
    <cofactor evidence="5">
        <name>FAD</name>
        <dbReference type="ChEBI" id="CHEBI:57692"/>
    </cofactor>
    <cofactor evidence="5">
        <name>FMN</name>
        <dbReference type="ChEBI" id="CHEBI:58210"/>
    </cofactor>
    <text evidence="5">Binds 1 FAD or 1 FMN per subunit.</text>
</comment>
<comment type="cofactor">
    <cofactor evidence="1">
        <name>Mg(2+)</name>
        <dbReference type="ChEBI" id="CHEBI:18420"/>
    </cofactor>
</comment>
<comment type="pathway">
    <text>Cofactor biosynthesis; tetrahydrofolate biosynthesis; 7,8-dihydrofolate from 2-amino-4-hydroxy-6-hydroxymethyl-7,8-dihydropteridine diphosphate and 4-aminobenzoate: step 1/2.</text>
</comment>
<comment type="domain">
    <text>The N-terminal extension of FolP is essential for the reducing activity and binds FMN.</text>
</comment>
<comment type="miscellaneous">
    <text evidence="9">FolP can complement an E.coli strain in which the two distinct genes encoding dihydrofolate reductases folA and folM are deleted.</text>
</comment>
<comment type="similarity">
    <text evidence="8">In the C-terminal section; belongs to the DHPS family.</text>
</comment>
<organism>
    <name type="scientific">Helicobacter pylori (strain ATCC 700392 / 26695)</name>
    <name type="common">Campylobacter pylori</name>
    <dbReference type="NCBI Taxonomy" id="85962"/>
    <lineage>
        <taxon>Bacteria</taxon>
        <taxon>Pseudomonadati</taxon>
        <taxon>Campylobacterota</taxon>
        <taxon>Epsilonproteobacteria</taxon>
        <taxon>Campylobacterales</taxon>
        <taxon>Helicobacteraceae</taxon>
        <taxon>Helicobacter</taxon>
    </lineage>
</organism>
<keyword id="KW-0274">FAD</keyword>
<keyword id="KW-0285">Flavoprotein</keyword>
<keyword id="KW-0288">FMN</keyword>
<keyword id="KW-0289">Folate biosynthesis</keyword>
<keyword id="KW-0460">Magnesium</keyword>
<keyword id="KW-0479">Metal-binding</keyword>
<keyword id="KW-0511">Multifunctional enzyme</keyword>
<keyword id="KW-0520">NAD</keyword>
<keyword id="KW-0560">Oxidoreductase</keyword>
<keyword id="KW-1185">Reference proteome</keyword>
<keyword id="KW-0808">Transferase</keyword>
<dbReference type="EC" id="1.5.8.-" evidence="5"/>
<dbReference type="EC" id="2.5.1.15" evidence="5"/>
<dbReference type="EMBL" id="AE000511">
    <property type="protein sequence ID" value="AAD08276.1"/>
    <property type="molecule type" value="Genomic_DNA"/>
</dbReference>
<dbReference type="EMBL" id="CP003904">
    <property type="protein sequence ID" value="AFV42447.1"/>
    <property type="molecule type" value="Genomic_DNA"/>
</dbReference>
<dbReference type="PIR" id="H64673">
    <property type="entry name" value="H64673"/>
</dbReference>
<dbReference type="RefSeq" id="NP_208024.1">
    <property type="nucleotide sequence ID" value="NC_000915.1"/>
</dbReference>
<dbReference type="RefSeq" id="WP_000636048.1">
    <property type="nucleotide sequence ID" value="NC_018939.1"/>
</dbReference>
<dbReference type="SMR" id="O25830"/>
<dbReference type="DIP" id="DIP-3693N"/>
<dbReference type="FunCoup" id="O25830">
    <property type="interactions" value="313"/>
</dbReference>
<dbReference type="IntAct" id="O25830">
    <property type="interactions" value="1"/>
</dbReference>
<dbReference type="MINT" id="O25830"/>
<dbReference type="STRING" id="85962.HP_1232"/>
<dbReference type="PaxDb" id="85962-C694_06360"/>
<dbReference type="EnsemblBacteria" id="AAD08276">
    <property type="protein sequence ID" value="AAD08276"/>
    <property type="gene ID" value="HP_1232"/>
</dbReference>
<dbReference type="KEGG" id="heo:C694_06360"/>
<dbReference type="KEGG" id="hpy:HP_1232"/>
<dbReference type="PATRIC" id="fig|85962.47.peg.1320"/>
<dbReference type="eggNOG" id="COG0294">
    <property type="taxonomic scope" value="Bacteria"/>
</dbReference>
<dbReference type="HOGENOM" id="CLU_008023_1_0_7"/>
<dbReference type="InParanoid" id="O25830"/>
<dbReference type="OrthoDB" id="9811744at2"/>
<dbReference type="PhylomeDB" id="O25830"/>
<dbReference type="BioCyc" id="MetaCyc:HP_RS06080-MONOMER"/>
<dbReference type="UniPathway" id="UPA00077">
    <property type="reaction ID" value="UER00156"/>
</dbReference>
<dbReference type="Proteomes" id="UP000000429">
    <property type="component" value="Chromosome"/>
</dbReference>
<dbReference type="GO" id="GO:0005829">
    <property type="term" value="C:cytosol"/>
    <property type="evidence" value="ECO:0000318"/>
    <property type="project" value="GO_Central"/>
</dbReference>
<dbReference type="GO" id="GO:0004156">
    <property type="term" value="F:dihydropteroate synthase activity"/>
    <property type="evidence" value="ECO:0000318"/>
    <property type="project" value="GO_Central"/>
</dbReference>
<dbReference type="GO" id="GO:0046872">
    <property type="term" value="F:metal ion binding"/>
    <property type="evidence" value="ECO:0007669"/>
    <property type="project" value="UniProtKB-KW"/>
</dbReference>
<dbReference type="GO" id="GO:0016491">
    <property type="term" value="F:oxidoreductase activity"/>
    <property type="evidence" value="ECO:0007669"/>
    <property type="project" value="UniProtKB-KW"/>
</dbReference>
<dbReference type="GO" id="GO:0046656">
    <property type="term" value="P:folic acid biosynthetic process"/>
    <property type="evidence" value="ECO:0007669"/>
    <property type="project" value="UniProtKB-KW"/>
</dbReference>
<dbReference type="GO" id="GO:0046654">
    <property type="term" value="P:tetrahydrofolate biosynthetic process"/>
    <property type="evidence" value="ECO:0000318"/>
    <property type="project" value="GO_Central"/>
</dbReference>
<dbReference type="CDD" id="cd00739">
    <property type="entry name" value="DHPS"/>
    <property type="match status" value="1"/>
</dbReference>
<dbReference type="FunFam" id="3.20.20.20:FF:000022">
    <property type="entry name" value="Dihydropteroate synthase"/>
    <property type="match status" value="1"/>
</dbReference>
<dbReference type="Gene3D" id="3.20.20.20">
    <property type="entry name" value="Dihydropteroate synthase-like"/>
    <property type="match status" value="1"/>
</dbReference>
<dbReference type="InterPro" id="IPR045031">
    <property type="entry name" value="DHP_synth-like"/>
</dbReference>
<dbReference type="InterPro" id="IPR006390">
    <property type="entry name" value="DHP_synth_dom"/>
</dbReference>
<dbReference type="InterPro" id="IPR011005">
    <property type="entry name" value="Dihydropteroate_synth-like_sf"/>
</dbReference>
<dbReference type="InterPro" id="IPR016227">
    <property type="entry name" value="Dihydropteroate_synthase_prd"/>
</dbReference>
<dbReference type="InterPro" id="IPR000489">
    <property type="entry name" value="Pterin-binding_dom"/>
</dbReference>
<dbReference type="NCBIfam" id="TIGR01496">
    <property type="entry name" value="DHPS"/>
    <property type="match status" value="1"/>
</dbReference>
<dbReference type="PANTHER" id="PTHR20941">
    <property type="entry name" value="FOLATE SYNTHESIS PROTEINS"/>
    <property type="match status" value="1"/>
</dbReference>
<dbReference type="PANTHER" id="PTHR20941:SF1">
    <property type="entry name" value="FOLIC ACID SYNTHESIS PROTEIN FOL1"/>
    <property type="match status" value="1"/>
</dbReference>
<dbReference type="Pfam" id="PF00809">
    <property type="entry name" value="Pterin_bind"/>
    <property type="match status" value="1"/>
</dbReference>
<dbReference type="PIRSF" id="PIRSF000501">
    <property type="entry name" value="DHPS_Campy_prd"/>
    <property type="match status" value="1"/>
</dbReference>
<dbReference type="SUPFAM" id="SSF51717">
    <property type="entry name" value="Dihydropteroate synthetase-like"/>
    <property type="match status" value="1"/>
</dbReference>
<dbReference type="PROSITE" id="PS50972">
    <property type="entry name" value="PTERIN_BINDING"/>
    <property type="match status" value="1"/>
</dbReference>
<protein>
    <recommendedName>
        <fullName>Bifunctional dihydropteroate synthase/dihydropteroate reductase</fullName>
    </recommendedName>
    <domain>
        <recommendedName>
            <fullName evidence="6">Dihydropteroate reductase</fullName>
            <shortName evidence="7">DHPR</shortName>
            <ecNumber evidence="5">1.5.8.-</ecNumber>
        </recommendedName>
    </domain>
    <domain>
        <recommendedName>
            <fullName evidence="6">Dihydropteroate synthase</fullName>
            <shortName evidence="6">DHPS</shortName>
            <ecNumber evidence="5">2.5.1.15</ecNumber>
        </recommendedName>
        <alternativeName>
            <fullName>Dihydropteroate pyrophosphorylase</fullName>
        </alternativeName>
    </domain>
</protein>
<feature type="chain" id="PRO_0000428675" description="Bifunctional dihydropteroate synthase/dihydropteroate reductase">
    <location>
        <begin position="1"/>
        <end position="380"/>
    </location>
</feature>
<feature type="domain" description="Pterin-binding" evidence="3">
    <location>
        <begin position="119"/>
        <end position="371"/>
    </location>
</feature>
<feature type="region of interest" description="Dihydropteroate reductase">
    <location>
        <begin position="1"/>
        <end position="104"/>
    </location>
</feature>
<feature type="region of interest" description="Dihydropteroate synthase">
    <location>
        <begin position="105"/>
        <end position="380"/>
    </location>
</feature>
<feature type="binding site" evidence="2">
    <location>
        <position position="126"/>
    </location>
    <ligand>
        <name>Mg(2+)</name>
        <dbReference type="ChEBI" id="CHEBI:18420"/>
    </ligand>
</feature>
<feature type="binding site" evidence="1">
    <location>
        <position position="202"/>
    </location>
    <ligand>
        <name>(7,8-dihydropterin-6-yl)methyl diphosphate</name>
        <dbReference type="ChEBI" id="CHEBI:72950"/>
    </ligand>
</feature>
<feature type="binding site" evidence="1">
    <location>
        <position position="221"/>
    </location>
    <ligand>
        <name>(7,8-dihydropterin-6-yl)methyl diphosphate</name>
        <dbReference type="ChEBI" id="CHEBI:72950"/>
    </ligand>
</feature>
<feature type="binding site" evidence="1">
    <location>
        <position position="289"/>
    </location>
    <ligand>
        <name>(7,8-dihydropterin-6-yl)methyl diphosphate</name>
        <dbReference type="ChEBI" id="CHEBI:72950"/>
    </ligand>
</feature>
<feature type="binding site" evidence="1">
    <location>
        <position position="325"/>
    </location>
    <ligand>
        <name>(7,8-dihydropterin-6-yl)methyl diphosphate</name>
        <dbReference type="ChEBI" id="CHEBI:72950"/>
    </ligand>
</feature>
<feature type="binding site" evidence="1">
    <location>
        <begin position="359"/>
        <end position="361"/>
    </location>
    <ligand>
        <name>(7,8-dihydropterin-6-yl)methyl diphosphate</name>
        <dbReference type="ChEBI" id="CHEBI:72950"/>
    </ligand>
</feature>
<feature type="mutagenesis site" description="Unable to bind FMN." evidence="5">
    <original>M</original>
    <variation>A</variation>
    <location>
        <position position="28"/>
    </location>
</feature>
<feature type="mutagenesis site" description="Unable to bind FMN." evidence="5">
    <original>K</original>
    <variation>A</variation>
    <location>
        <position position="31"/>
    </location>
</feature>
<feature type="mutagenesis site" description="Unstable protein." evidence="5">
    <original>K</original>
    <variation>A</variation>
    <location>
        <position position="51"/>
    </location>
</feature>
<feature type="mutagenesis site" description="No effect." evidence="5">
    <original>G</original>
    <variation>A</variation>
    <location>
        <position position="58"/>
    </location>
</feature>
<feature type="mutagenesis site" description="Unable to bind FMN." evidence="5">
    <original>K</original>
    <variation>E</variation>
    <location>
        <position position="92"/>
    </location>
</feature>
<gene>
    <name evidence="7" type="primary">folP</name>
    <name type="ordered locus">C694_06360</name>
    <name type="ordered locus">HP_1232</name>
</gene>
<proteinExistence type="evidence at protein level"/>
<evidence type="ECO:0000250" key="1">
    <source>
        <dbReference type="UniProtKB" id="P0AC13"/>
    </source>
</evidence>
<evidence type="ECO:0000250" key="2">
    <source>
        <dbReference type="UniProtKB" id="P9WND1"/>
    </source>
</evidence>
<evidence type="ECO:0000255" key="3">
    <source>
        <dbReference type="PROSITE-ProRule" id="PRU00334"/>
    </source>
</evidence>
<evidence type="ECO:0000269" key="4">
    <source>
    </source>
</evidence>
<evidence type="ECO:0000269" key="5">
    <source>
    </source>
</evidence>
<evidence type="ECO:0000303" key="6">
    <source>
    </source>
</evidence>
<evidence type="ECO:0000303" key="7">
    <source>
    </source>
</evidence>
<evidence type="ECO:0000305" key="8"/>
<evidence type="ECO:0000305" key="9">
    <source>
    </source>
</evidence>